<keyword id="KW-0963">Cytoplasm</keyword>
<keyword id="KW-0413">Isomerase</keyword>
<keyword id="KW-0464">Manganese</keyword>
<keyword id="KW-0479">Metal-binding</keyword>
<keyword id="KW-1185">Reference proteome</keyword>
<organism>
    <name type="scientific">Desulfitobacterium hafniense (strain Y51)</name>
    <dbReference type="NCBI Taxonomy" id="138119"/>
    <lineage>
        <taxon>Bacteria</taxon>
        <taxon>Bacillati</taxon>
        <taxon>Bacillota</taxon>
        <taxon>Clostridia</taxon>
        <taxon>Eubacteriales</taxon>
        <taxon>Desulfitobacteriaceae</taxon>
        <taxon>Desulfitobacterium</taxon>
    </lineage>
</organism>
<gene>
    <name evidence="1" type="primary">deoB</name>
    <name type="ordered locus">DSY2312</name>
</gene>
<sequence>MKRAILIVLDSVGIGEMPDAHEYGDVGSNTIGNIAKARGGLHLPHLQRLGLGNIAPIQGVDPEASPQGCYGKMAERSPGKDTTTGHWEIAGVVLERAFPTFSKGFPEDFLQAFAERIGRQVIGNEVASGTEIIQRLGQEHVRTGKPIAYTSADSVFQIAAHEEVIPLEELYRICGIAREMLEGDLRVGRVIARPFLGEEGNFYRTTNRHDYAIEPPHKILLDMVKEKGLRVMAVGKIKDIYAGHGVTDHLASKGNRDGVEKTLAFIREKKPGLIMTNLVDFDMLYGHRNDVENYAQALEEFDGRLPEILASLEEEDILFITADHGCDPTTESTDHSREYVPLLVYGKKVVPGRNLGIRSSFADLGATIAEYLGTEELVNGRSFLGELI</sequence>
<reference key="1">
    <citation type="journal article" date="2006" name="J. Bacteriol.">
        <title>Complete genome sequence of the dehalorespiring bacterium Desulfitobacterium hafniense Y51 and comparison with Dehalococcoides ethenogenes 195.</title>
        <authorList>
            <person name="Nonaka H."/>
            <person name="Keresztes G."/>
            <person name="Shinoda Y."/>
            <person name="Ikenaga Y."/>
            <person name="Abe M."/>
            <person name="Naito K."/>
            <person name="Inatomi K."/>
            <person name="Furukawa K."/>
            <person name="Inui M."/>
            <person name="Yukawa H."/>
        </authorList>
    </citation>
    <scope>NUCLEOTIDE SEQUENCE [LARGE SCALE GENOMIC DNA]</scope>
    <source>
        <strain>Y51</strain>
    </source>
</reference>
<comment type="function">
    <text evidence="1">Isomerase that catalyzes the conversion of deoxy-ribose 1-phosphate (dRib-1-P) and ribose 1-phosphate (Rib-1-P) to deoxy-ribose 5-phosphate (dRib-5-P) and ribose 5-phosphate (Rib-5-P), respectively.</text>
</comment>
<comment type="catalytic activity">
    <reaction evidence="1">
        <text>2-deoxy-alpha-D-ribose 1-phosphate = 2-deoxy-D-ribose 5-phosphate</text>
        <dbReference type="Rhea" id="RHEA:27658"/>
        <dbReference type="ChEBI" id="CHEBI:57259"/>
        <dbReference type="ChEBI" id="CHEBI:62877"/>
        <dbReference type="EC" id="5.4.2.7"/>
    </reaction>
</comment>
<comment type="catalytic activity">
    <reaction evidence="1">
        <text>alpha-D-ribose 1-phosphate = D-ribose 5-phosphate</text>
        <dbReference type="Rhea" id="RHEA:18793"/>
        <dbReference type="ChEBI" id="CHEBI:57720"/>
        <dbReference type="ChEBI" id="CHEBI:78346"/>
        <dbReference type="EC" id="5.4.2.7"/>
    </reaction>
</comment>
<comment type="cofactor">
    <cofactor evidence="1">
        <name>Mn(2+)</name>
        <dbReference type="ChEBI" id="CHEBI:29035"/>
    </cofactor>
    <text evidence="1">Binds 2 manganese ions.</text>
</comment>
<comment type="pathway">
    <text evidence="1">Carbohydrate degradation; 2-deoxy-D-ribose 1-phosphate degradation; D-glyceraldehyde 3-phosphate and acetaldehyde from 2-deoxy-alpha-D-ribose 1-phosphate: step 1/2.</text>
</comment>
<comment type="subcellular location">
    <subcellularLocation>
        <location evidence="1">Cytoplasm</location>
    </subcellularLocation>
</comment>
<comment type="similarity">
    <text evidence="1">Belongs to the phosphopentomutase family.</text>
</comment>
<protein>
    <recommendedName>
        <fullName evidence="1">Phosphopentomutase</fullName>
        <ecNumber evidence="1">5.4.2.7</ecNumber>
    </recommendedName>
    <alternativeName>
        <fullName evidence="1">Phosphodeoxyribomutase</fullName>
    </alternativeName>
</protein>
<proteinExistence type="inferred from homology"/>
<evidence type="ECO:0000255" key="1">
    <source>
        <dbReference type="HAMAP-Rule" id="MF_00740"/>
    </source>
</evidence>
<accession>Q24V41</accession>
<name>DEOB_DESHY</name>
<dbReference type="EC" id="5.4.2.7" evidence="1"/>
<dbReference type="EMBL" id="AP008230">
    <property type="protein sequence ID" value="BAE84101.1"/>
    <property type="molecule type" value="Genomic_DNA"/>
</dbReference>
<dbReference type="RefSeq" id="WP_005811028.1">
    <property type="nucleotide sequence ID" value="NC_007907.1"/>
</dbReference>
<dbReference type="SMR" id="Q24V41"/>
<dbReference type="STRING" id="138119.DSY2312"/>
<dbReference type="KEGG" id="dsy:DSY2312"/>
<dbReference type="eggNOG" id="COG1015">
    <property type="taxonomic scope" value="Bacteria"/>
</dbReference>
<dbReference type="HOGENOM" id="CLU_053861_0_0_9"/>
<dbReference type="UniPathway" id="UPA00002">
    <property type="reaction ID" value="UER00467"/>
</dbReference>
<dbReference type="Proteomes" id="UP000001946">
    <property type="component" value="Chromosome"/>
</dbReference>
<dbReference type="GO" id="GO:0005829">
    <property type="term" value="C:cytosol"/>
    <property type="evidence" value="ECO:0007669"/>
    <property type="project" value="TreeGrafter"/>
</dbReference>
<dbReference type="GO" id="GO:0000287">
    <property type="term" value="F:magnesium ion binding"/>
    <property type="evidence" value="ECO:0007669"/>
    <property type="project" value="InterPro"/>
</dbReference>
<dbReference type="GO" id="GO:0030145">
    <property type="term" value="F:manganese ion binding"/>
    <property type="evidence" value="ECO:0007669"/>
    <property type="project" value="UniProtKB-UniRule"/>
</dbReference>
<dbReference type="GO" id="GO:0008973">
    <property type="term" value="F:phosphopentomutase activity"/>
    <property type="evidence" value="ECO:0007669"/>
    <property type="project" value="UniProtKB-UniRule"/>
</dbReference>
<dbReference type="GO" id="GO:0006018">
    <property type="term" value="P:2-deoxyribose 1-phosphate catabolic process"/>
    <property type="evidence" value="ECO:0007669"/>
    <property type="project" value="UniProtKB-UniRule"/>
</dbReference>
<dbReference type="GO" id="GO:0006015">
    <property type="term" value="P:5-phosphoribose 1-diphosphate biosynthetic process"/>
    <property type="evidence" value="ECO:0007669"/>
    <property type="project" value="UniProtKB-UniPathway"/>
</dbReference>
<dbReference type="GO" id="GO:0043094">
    <property type="term" value="P:metabolic compound salvage"/>
    <property type="evidence" value="ECO:0007669"/>
    <property type="project" value="InterPro"/>
</dbReference>
<dbReference type="GO" id="GO:0009117">
    <property type="term" value="P:nucleotide metabolic process"/>
    <property type="evidence" value="ECO:0007669"/>
    <property type="project" value="InterPro"/>
</dbReference>
<dbReference type="CDD" id="cd16009">
    <property type="entry name" value="PPM"/>
    <property type="match status" value="1"/>
</dbReference>
<dbReference type="FunFam" id="3.30.70.1250:FF:000001">
    <property type="entry name" value="Phosphopentomutase"/>
    <property type="match status" value="1"/>
</dbReference>
<dbReference type="Gene3D" id="3.40.720.10">
    <property type="entry name" value="Alkaline Phosphatase, subunit A"/>
    <property type="match status" value="1"/>
</dbReference>
<dbReference type="Gene3D" id="3.30.70.1250">
    <property type="entry name" value="Phosphopentomutase"/>
    <property type="match status" value="1"/>
</dbReference>
<dbReference type="HAMAP" id="MF_00740">
    <property type="entry name" value="Phosphopentomut"/>
    <property type="match status" value="1"/>
</dbReference>
<dbReference type="InterPro" id="IPR017850">
    <property type="entry name" value="Alkaline_phosphatase_core_sf"/>
</dbReference>
<dbReference type="InterPro" id="IPR010045">
    <property type="entry name" value="DeoB"/>
</dbReference>
<dbReference type="InterPro" id="IPR006124">
    <property type="entry name" value="Metalloenzyme"/>
</dbReference>
<dbReference type="InterPro" id="IPR024052">
    <property type="entry name" value="Phosphopentomutase_DeoB_cap_sf"/>
</dbReference>
<dbReference type="NCBIfam" id="TIGR01696">
    <property type="entry name" value="deoB"/>
    <property type="match status" value="1"/>
</dbReference>
<dbReference type="NCBIfam" id="NF003766">
    <property type="entry name" value="PRK05362.1"/>
    <property type="match status" value="1"/>
</dbReference>
<dbReference type="PANTHER" id="PTHR21110">
    <property type="entry name" value="PHOSPHOPENTOMUTASE"/>
    <property type="match status" value="1"/>
</dbReference>
<dbReference type="PANTHER" id="PTHR21110:SF0">
    <property type="entry name" value="PHOSPHOPENTOMUTASE"/>
    <property type="match status" value="1"/>
</dbReference>
<dbReference type="Pfam" id="PF01676">
    <property type="entry name" value="Metalloenzyme"/>
    <property type="match status" value="1"/>
</dbReference>
<dbReference type="PIRSF" id="PIRSF001491">
    <property type="entry name" value="Ppentomutase"/>
    <property type="match status" value="1"/>
</dbReference>
<dbReference type="SUPFAM" id="SSF53649">
    <property type="entry name" value="Alkaline phosphatase-like"/>
    <property type="match status" value="1"/>
</dbReference>
<dbReference type="SUPFAM" id="SSF143856">
    <property type="entry name" value="DeoB insert domain-like"/>
    <property type="match status" value="1"/>
</dbReference>
<feature type="chain" id="PRO_0000258282" description="Phosphopentomutase">
    <location>
        <begin position="1"/>
        <end position="388"/>
    </location>
</feature>
<feature type="binding site" evidence="1">
    <location>
        <position position="10"/>
    </location>
    <ligand>
        <name>Mn(2+)</name>
        <dbReference type="ChEBI" id="CHEBI:29035"/>
        <label>1</label>
    </ligand>
</feature>
<feature type="binding site" evidence="1">
    <location>
        <position position="282"/>
    </location>
    <ligand>
        <name>Mn(2+)</name>
        <dbReference type="ChEBI" id="CHEBI:29035"/>
        <label>2</label>
    </ligand>
</feature>
<feature type="binding site" evidence="1">
    <location>
        <position position="287"/>
    </location>
    <ligand>
        <name>Mn(2+)</name>
        <dbReference type="ChEBI" id="CHEBI:29035"/>
        <label>2</label>
    </ligand>
</feature>
<feature type="binding site" evidence="1">
    <location>
        <position position="323"/>
    </location>
    <ligand>
        <name>Mn(2+)</name>
        <dbReference type="ChEBI" id="CHEBI:29035"/>
        <label>1</label>
    </ligand>
</feature>
<feature type="binding site" evidence="1">
    <location>
        <position position="324"/>
    </location>
    <ligand>
        <name>Mn(2+)</name>
        <dbReference type="ChEBI" id="CHEBI:29035"/>
        <label>1</label>
    </ligand>
</feature>
<feature type="binding site" evidence="1">
    <location>
        <position position="335"/>
    </location>
    <ligand>
        <name>Mn(2+)</name>
        <dbReference type="ChEBI" id="CHEBI:29035"/>
        <label>2</label>
    </ligand>
</feature>